<comment type="function">
    <text evidence="1">Catalyzes oxygen-dependent 5-hydroxyuridine (ho5U) modification at position 34 in tRNAs.</text>
</comment>
<comment type="catalytic activity">
    <reaction evidence="1">
        <text>uridine(34) in tRNA + AH2 + O2 = 5-hydroxyuridine(34) in tRNA + A + H2O</text>
        <dbReference type="Rhea" id="RHEA:64224"/>
        <dbReference type="Rhea" id="RHEA-COMP:11727"/>
        <dbReference type="Rhea" id="RHEA-COMP:13381"/>
        <dbReference type="ChEBI" id="CHEBI:13193"/>
        <dbReference type="ChEBI" id="CHEBI:15377"/>
        <dbReference type="ChEBI" id="CHEBI:15379"/>
        <dbReference type="ChEBI" id="CHEBI:17499"/>
        <dbReference type="ChEBI" id="CHEBI:65315"/>
        <dbReference type="ChEBI" id="CHEBI:136877"/>
    </reaction>
</comment>
<comment type="similarity">
    <text evidence="1">Belongs to the TrhO family.</text>
</comment>
<organism>
    <name type="scientific">Photorhabdus laumondii subsp. laumondii (strain DSM 15139 / CIP 105565 / TT01)</name>
    <name type="common">Photorhabdus luminescens subsp. laumondii</name>
    <dbReference type="NCBI Taxonomy" id="243265"/>
    <lineage>
        <taxon>Bacteria</taxon>
        <taxon>Pseudomonadati</taxon>
        <taxon>Pseudomonadota</taxon>
        <taxon>Gammaproteobacteria</taxon>
        <taxon>Enterobacterales</taxon>
        <taxon>Morganellaceae</taxon>
        <taxon>Photorhabdus</taxon>
    </lineage>
</organism>
<dbReference type="EC" id="1.14.-.-" evidence="1"/>
<dbReference type="EMBL" id="BX571865">
    <property type="protein sequence ID" value="CAE14109.1"/>
    <property type="molecule type" value="Genomic_DNA"/>
</dbReference>
<dbReference type="RefSeq" id="WP_011146093.1">
    <property type="nucleotide sequence ID" value="NC_005126.1"/>
</dbReference>
<dbReference type="SMR" id="Q7N5W3"/>
<dbReference type="STRING" id="243265.plu1816"/>
<dbReference type="GeneID" id="48848093"/>
<dbReference type="KEGG" id="plu:plu1816"/>
<dbReference type="eggNOG" id="COG1054">
    <property type="taxonomic scope" value="Bacteria"/>
</dbReference>
<dbReference type="HOGENOM" id="CLU_038878_1_1_6"/>
<dbReference type="OrthoDB" id="9778326at2"/>
<dbReference type="Proteomes" id="UP000002514">
    <property type="component" value="Chromosome"/>
</dbReference>
<dbReference type="GO" id="GO:0016705">
    <property type="term" value="F:oxidoreductase activity, acting on paired donors, with incorporation or reduction of molecular oxygen"/>
    <property type="evidence" value="ECO:0007669"/>
    <property type="project" value="UniProtKB-UniRule"/>
</dbReference>
<dbReference type="GO" id="GO:0006400">
    <property type="term" value="P:tRNA modification"/>
    <property type="evidence" value="ECO:0007669"/>
    <property type="project" value="UniProtKB-UniRule"/>
</dbReference>
<dbReference type="CDD" id="cd01518">
    <property type="entry name" value="RHOD_YceA"/>
    <property type="match status" value="1"/>
</dbReference>
<dbReference type="Gene3D" id="3.30.70.100">
    <property type="match status" value="1"/>
</dbReference>
<dbReference type="Gene3D" id="3.40.250.10">
    <property type="entry name" value="Rhodanese-like domain"/>
    <property type="match status" value="1"/>
</dbReference>
<dbReference type="HAMAP" id="MF_00469">
    <property type="entry name" value="TrhO"/>
    <property type="match status" value="1"/>
</dbReference>
<dbReference type="InterPro" id="IPR001763">
    <property type="entry name" value="Rhodanese-like_dom"/>
</dbReference>
<dbReference type="InterPro" id="IPR036873">
    <property type="entry name" value="Rhodanese-like_dom_sf"/>
</dbReference>
<dbReference type="InterPro" id="IPR022111">
    <property type="entry name" value="Rhodanese_C"/>
</dbReference>
<dbReference type="InterPro" id="IPR020936">
    <property type="entry name" value="TrhO"/>
</dbReference>
<dbReference type="InterPro" id="IPR040503">
    <property type="entry name" value="TRHO_N"/>
</dbReference>
<dbReference type="NCBIfam" id="NF001133">
    <property type="entry name" value="PRK00142.1-1"/>
    <property type="match status" value="1"/>
</dbReference>
<dbReference type="PANTHER" id="PTHR43846:SF1">
    <property type="entry name" value="TRNA URIDINE(34) HYDROXYLASE"/>
    <property type="match status" value="1"/>
</dbReference>
<dbReference type="PANTHER" id="PTHR43846">
    <property type="entry name" value="UPF0176 PROTEIN YCEA"/>
    <property type="match status" value="1"/>
</dbReference>
<dbReference type="Pfam" id="PF00581">
    <property type="entry name" value="Rhodanese"/>
    <property type="match status" value="1"/>
</dbReference>
<dbReference type="Pfam" id="PF12368">
    <property type="entry name" value="Rhodanese_C"/>
    <property type="match status" value="1"/>
</dbReference>
<dbReference type="Pfam" id="PF17773">
    <property type="entry name" value="UPF0176_N"/>
    <property type="match status" value="1"/>
</dbReference>
<dbReference type="SMART" id="SM00450">
    <property type="entry name" value="RHOD"/>
    <property type="match status" value="1"/>
</dbReference>
<dbReference type="SUPFAM" id="SSF52821">
    <property type="entry name" value="Rhodanese/Cell cycle control phosphatase"/>
    <property type="match status" value="1"/>
</dbReference>
<dbReference type="PROSITE" id="PS50206">
    <property type="entry name" value="RHODANESE_3"/>
    <property type="match status" value="1"/>
</dbReference>
<gene>
    <name evidence="1" type="primary">trhO</name>
    <name type="ordered locus">plu1816</name>
</gene>
<proteinExistence type="inferred from homology"/>
<protein>
    <recommendedName>
        <fullName evidence="1">tRNA uridine(34) hydroxylase</fullName>
        <ecNumber evidence="1">1.14.-.-</ecNumber>
    </recommendedName>
    <alternativeName>
        <fullName evidence="1">tRNA hydroxylation protein O</fullName>
    </alternativeName>
</protein>
<feature type="chain" id="PRO_0000161492" description="tRNA uridine(34) hydroxylase">
    <location>
        <begin position="1"/>
        <end position="352"/>
    </location>
</feature>
<feature type="domain" description="Rhodanese" evidence="1">
    <location>
        <begin position="146"/>
        <end position="240"/>
    </location>
</feature>
<feature type="region of interest" description="Disordered" evidence="2">
    <location>
        <begin position="315"/>
        <end position="352"/>
    </location>
</feature>
<feature type="compositionally biased region" description="Basic and acidic residues" evidence="2">
    <location>
        <begin position="315"/>
        <end position="328"/>
    </location>
</feature>
<feature type="compositionally biased region" description="Polar residues" evidence="2">
    <location>
        <begin position="342"/>
        <end position="352"/>
    </location>
</feature>
<feature type="active site" description="Cysteine persulfide intermediate" evidence="1">
    <location>
        <position position="200"/>
    </location>
</feature>
<reference key="1">
    <citation type="journal article" date="2003" name="Nat. Biotechnol.">
        <title>The genome sequence of the entomopathogenic bacterium Photorhabdus luminescens.</title>
        <authorList>
            <person name="Duchaud E."/>
            <person name="Rusniok C."/>
            <person name="Frangeul L."/>
            <person name="Buchrieser C."/>
            <person name="Givaudan A."/>
            <person name="Taourit S."/>
            <person name="Bocs S."/>
            <person name="Boursaux-Eude C."/>
            <person name="Chandler M."/>
            <person name="Charles J.-F."/>
            <person name="Dassa E."/>
            <person name="Derose R."/>
            <person name="Derzelle S."/>
            <person name="Freyssinet G."/>
            <person name="Gaudriault S."/>
            <person name="Medigue C."/>
            <person name="Lanois A."/>
            <person name="Powell K."/>
            <person name="Siguier P."/>
            <person name="Vincent R."/>
            <person name="Wingate V."/>
            <person name="Zouine M."/>
            <person name="Glaser P."/>
            <person name="Boemare N."/>
            <person name="Danchin A."/>
            <person name="Kunst F."/>
        </authorList>
    </citation>
    <scope>NUCLEOTIDE SEQUENCE [LARGE SCALE GENOMIC DNA]</scope>
    <source>
        <strain>DSM 15139 / CIP 105565 / TT01</strain>
    </source>
</reference>
<sequence>MPVLHNRISNKELKARMLAETQPRTTISFYKYFNILNPLDFRNSLYQQFTDLSVFGRVYIAKEGINAQISLPTHNLEAFKALLYSVDPALDNLRLNIALDDDGKSFWVLRMKVRDRVVADGIDDETFDPSKTGEYLKAEQVNQMLDNPDTLFVDMRNHYEYEVGHFENAIEVPSDTFREQLPMVAEMLQDNKDKNIVMYCTGGIRCEKASAYMLHNGFKNVYHVEGGIIEYARKAREQGLPVRFVGKNFVFDERMGERISDDVIAHCHQCGVSCDSHTNCKNEGCHLLFIQCPECATKFEGCCSEMCREEVRLPETEQRARRAGRENGAKIFNKSRHRLQDGLNSTSLQSVE</sequence>
<evidence type="ECO:0000255" key="1">
    <source>
        <dbReference type="HAMAP-Rule" id="MF_00469"/>
    </source>
</evidence>
<evidence type="ECO:0000256" key="2">
    <source>
        <dbReference type="SAM" id="MobiDB-lite"/>
    </source>
</evidence>
<name>TRHO_PHOLL</name>
<accession>Q7N5W3</accession>
<keyword id="KW-0560">Oxidoreductase</keyword>
<keyword id="KW-1185">Reference proteome</keyword>
<keyword id="KW-0819">tRNA processing</keyword>